<gene>
    <name type="ORF">GSPATT00010582001</name>
</gene>
<comment type="function">
    <text evidence="1">Enzyme with a broad specificity.</text>
</comment>
<comment type="catalytic activity">
    <reaction>
        <text>O-phospho-L-seryl-[protein] + H2O = L-seryl-[protein] + phosphate</text>
        <dbReference type="Rhea" id="RHEA:20629"/>
        <dbReference type="Rhea" id="RHEA-COMP:9863"/>
        <dbReference type="Rhea" id="RHEA-COMP:11604"/>
        <dbReference type="ChEBI" id="CHEBI:15377"/>
        <dbReference type="ChEBI" id="CHEBI:29999"/>
        <dbReference type="ChEBI" id="CHEBI:43474"/>
        <dbReference type="ChEBI" id="CHEBI:83421"/>
        <dbReference type="EC" id="3.1.3.16"/>
    </reaction>
</comment>
<comment type="catalytic activity">
    <reaction>
        <text>O-phospho-L-threonyl-[protein] + H2O = L-threonyl-[protein] + phosphate</text>
        <dbReference type="Rhea" id="RHEA:47004"/>
        <dbReference type="Rhea" id="RHEA-COMP:11060"/>
        <dbReference type="Rhea" id="RHEA-COMP:11605"/>
        <dbReference type="ChEBI" id="CHEBI:15377"/>
        <dbReference type="ChEBI" id="CHEBI:30013"/>
        <dbReference type="ChEBI" id="CHEBI:43474"/>
        <dbReference type="ChEBI" id="CHEBI:61977"/>
        <dbReference type="EC" id="3.1.3.16"/>
    </reaction>
</comment>
<comment type="cofactor">
    <cofactor evidence="1">
        <name>Mg(2+)</name>
        <dbReference type="ChEBI" id="CHEBI:18420"/>
    </cofactor>
    <cofactor evidence="1">
        <name>Mn(2+)</name>
        <dbReference type="ChEBI" id="CHEBI:29035"/>
    </cofactor>
    <text evidence="1">Binds 2 magnesium or manganese ions per subunit.</text>
</comment>
<comment type="subcellular location">
    <subcellularLocation>
        <location evidence="1">Membrane</location>
        <topology evidence="1">Peripheral membrane protein</topology>
    </subcellularLocation>
</comment>
<comment type="similarity">
    <text evidence="4">Belongs to the PP2C family.</text>
</comment>
<accession>A0CUB5</accession>
<sequence>MGPYLSQPKTEKSTVTGQNQVFQYAATHMQGWRNTMEDAHISDMNIEPDVHLFAVFDGHGGSEVAIFAERHFREELMKNKNYQQKNYEKALTETFFKIDKMLQEPSGQDELNKIRGVNDETSLAGCTANVALIVGKTLYVANAGDSRSFLNRDGKPFDMSKDHKPDDDQEKKRIERAGGFVSDGRANGNLSLSRALGDLEYKKDSRFKPEEQIISALPDVKVTQLTASDKFLLMGCDGVFETWDHQQILNFVNQELKSSQNLQKATEKLLDQLLAKDTSLGTGCDNMTCILVLFK</sequence>
<evidence type="ECO:0000250" key="1"/>
<evidence type="ECO:0000255" key="2">
    <source>
        <dbReference type="PROSITE-ProRule" id="PRU01082"/>
    </source>
</evidence>
<evidence type="ECO:0000256" key="3">
    <source>
        <dbReference type="SAM" id="MobiDB-lite"/>
    </source>
</evidence>
<evidence type="ECO:0000305" key="4"/>
<proteinExistence type="inferred from homology"/>
<dbReference type="EC" id="3.1.3.16"/>
<dbReference type="EMBL" id="CT868185">
    <property type="protein sequence ID" value="CAK74382.1"/>
    <property type="molecule type" value="Genomic_DNA"/>
</dbReference>
<dbReference type="RefSeq" id="XP_001441779.1">
    <property type="nucleotide sequence ID" value="XM_001441742.2"/>
</dbReference>
<dbReference type="SMR" id="A0CUB5"/>
<dbReference type="FunCoup" id="A0CUB5">
    <property type="interactions" value="1470"/>
</dbReference>
<dbReference type="STRING" id="5888.A0CUB5"/>
<dbReference type="EnsemblProtists" id="CAK74382">
    <property type="protein sequence ID" value="CAK74382"/>
    <property type="gene ID" value="GSPATT00010582001"/>
</dbReference>
<dbReference type="GeneID" id="5027564"/>
<dbReference type="KEGG" id="ptm:GSPATT00010582001"/>
<dbReference type="eggNOG" id="KOG0698">
    <property type="taxonomic scope" value="Eukaryota"/>
</dbReference>
<dbReference type="HOGENOM" id="CLU_013173_4_1_1"/>
<dbReference type="InParanoid" id="A0CUB5"/>
<dbReference type="OMA" id="TKRPEYR"/>
<dbReference type="OrthoDB" id="10264738at2759"/>
<dbReference type="Proteomes" id="UP000000600">
    <property type="component" value="Partially assembled WGS sequence"/>
</dbReference>
<dbReference type="GO" id="GO:0016020">
    <property type="term" value="C:membrane"/>
    <property type="evidence" value="ECO:0007669"/>
    <property type="project" value="UniProtKB-SubCell"/>
</dbReference>
<dbReference type="GO" id="GO:0046872">
    <property type="term" value="F:metal ion binding"/>
    <property type="evidence" value="ECO:0007669"/>
    <property type="project" value="UniProtKB-KW"/>
</dbReference>
<dbReference type="GO" id="GO:0004722">
    <property type="term" value="F:protein serine/threonine phosphatase activity"/>
    <property type="evidence" value="ECO:0007669"/>
    <property type="project" value="UniProtKB-EC"/>
</dbReference>
<dbReference type="GO" id="GO:0007165">
    <property type="term" value="P:signal transduction"/>
    <property type="evidence" value="ECO:0000318"/>
    <property type="project" value="GO_Central"/>
</dbReference>
<dbReference type="CDD" id="cd00143">
    <property type="entry name" value="PP2Cc"/>
    <property type="match status" value="1"/>
</dbReference>
<dbReference type="FunFam" id="3.60.40.10:FF:000064">
    <property type="entry name" value="Protein phosphatase 2C 1"/>
    <property type="match status" value="1"/>
</dbReference>
<dbReference type="Gene3D" id="3.60.40.10">
    <property type="entry name" value="PPM-type phosphatase domain"/>
    <property type="match status" value="1"/>
</dbReference>
<dbReference type="InterPro" id="IPR015655">
    <property type="entry name" value="PP2C"/>
</dbReference>
<dbReference type="InterPro" id="IPR000222">
    <property type="entry name" value="PP2C_BS"/>
</dbReference>
<dbReference type="InterPro" id="IPR036457">
    <property type="entry name" value="PPM-type-like_dom_sf"/>
</dbReference>
<dbReference type="InterPro" id="IPR001932">
    <property type="entry name" value="PPM-type_phosphatase-like_dom"/>
</dbReference>
<dbReference type="PANTHER" id="PTHR13832:SF803">
    <property type="entry name" value="PROTEIN PHOSPHATASE 1G"/>
    <property type="match status" value="1"/>
</dbReference>
<dbReference type="PANTHER" id="PTHR13832">
    <property type="entry name" value="PROTEIN PHOSPHATASE 2C"/>
    <property type="match status" value="1"/>
</dbReference>
<dbReference type="Pfam" id="PF00481">
    <property type="entry name" value="PP2C"/>
    <property type="match status" value="1"/>
</dbReference>
<dbReference type="SMART" id="SM00332">
    <property type="entry name" value="PP2Cc"/>
    <property type="match status" value="1"/>
</dbReference>
<dbReference type="SUPFAM" id="SSF81606">
    <property type="entry name" value="PP2C-like"/>
    <property type="match status" value="1"/>
</dbReference>
<dbReference type="PROSITE" id="PS01032">
    <property type="entry name" value="PPM_1"/>
    <property type="match status" value="1"/>
</dbReference>
<dbReference type="PROSITE" id="PS51746">
    <property type="entry name" value="PPM_2"/>
    <property type="match status" value="1"/>
</dbReference>
<name>PP2C5_PARTE</name>
<reference key="1">
    <citation type="journal article" date="2006" name="Nature">
        <title>Global trends of whole-genome duplications revealed by the ciliate Paramecium tetraurelia.</title>
        <authorList>
            <person name="Aury J.-M."/>
            <person name="Jaillon O."/>
            <person name="Duret L."/>
            <person name="Noel B."/>
            <person name="Jubin C."/>
            <person name="Porcel B.M."/>
            <person name="Segurens B."/>
            <person name="Daubin V."/>
            <person name="Anthouard V."/>
            <person name="Aiach N."/>
            <person name="Arnaiz O."/>
            <person name="Billaut A."/>
            <person name="Beisson J."/>
            <person name="Blanc I."/>
            <person name="Bouhouche K."/>
            <person name="Camara F."/>
            <person name="Duharcourt S."/>
            <person name="Guigo R."/>
            <person name="Gogendeau D."/>
            <person name="Katinka M."/>
            <person name="Keller A.-M."/>
            <person name="Kissmehl R."/>
            <person name="Klotz C."/>
            <person name="Koll F."/>
            <person name="Le Mouel A."/>
            <person name="Lepere G."/>
            <person name="Malinsky S."/>
            <person name="Nowacki M."/>
            <person name="Nowak J.K."/>
            <person name="Plattner H."/>
            <person name="Poulain J."/>
            <person name="Ruiz F."/>
            <person name="Serrano V."/>
            <person name="Zagulski M."/>
            <person name="Dessen P."/>
            <person name="Betermier M."/>
            <person name="Weissenbach J."/>
            <person name="Scarpelli C."/>
            <person name="Schaechter V."/>
            <person name="Sperling L."/>
            <person name="Meyer E."/>
            <person name="Cohen J."/>
            <person name="Wincker P."/>
        </authorList>
    </citation>
    <scope>NUCLEOTIDE SEQUENCE [LARGE SCALE GENOMIC DNA]</scope>
    <source>
        <strain>Stock d4-2</strain>
    </source>
</reference>
<feature type="chain" id="PRO_0000307832" description="Probable protein phosphatase 2C 5">
    <location>
        <begin position="1"/>
        <end position="295"/>
    </location>
</feature>
<feature type="domain" description="PPM-type phosphatase" evidence="2">
    <location>
        <begin position="23"/>
        <end position="294"/>
    </location>
</feature>
<feature type="region of interest" description="Disordered" evidence="3">
    <location>
        <begin position="151"/>
        <end position="170"/>
    </location>
</feature>
<feature type="binding site" evidence="1">
    <location>
        <position position="57"/>
    </location>
    <ligand>
        <name>Mn(2+)</name>
        <dbReference type="ChEBI" id="CHEBI:29035"/>
        <label>1</label>
    </ligand>
</feature>
<feature type="binding site" evidence="1">
    <location>
        <position position="57"/>
    </location>
    <ligand>
        <name>Mn(2+)</name>
        <dbReference type="ChEBI" id="CHEBI:29035"/>
        <label>2</label>
    </ligand>
</feature>
<feature type="binding site" evidence="1">
    <location>
        <position position="58"/>
    </location>
    <ligand>
        <name>Mn(2+)</name>
        <dbReference type="ChEBI" id="CHEBI:29035"/>
        <label>1</label>
    </ligand>
</feature>
<feature type="binding site" evidence="1">
    <location>
        <position position="237"/>
    </location>
    <ligand>
        <name>Mn(2+)</name>
        <dbReference type="ChEBI" id="CHEBI:29035"/>
        <label>2</label>
    </ligand>
</feature>
<feature type="binding site" evidence="1">
    <location>
        <position position="285"/>
    </location>
    <ligand>
        <name>Mn(2+)</name>
        <dbReference type="ChEBI" id="CHEBI:29035"/>
        <label>2</label>
    </ligand>
</feature>
<keyword id="KW-0378">Hydrolase</keyword>
<keyword id="KW-0460">Magnesium</keyword>
<keyword id="KW-0464">Manganese</keyword>
<keyword id="KW-0472">Membrane</keyword>
<keyword id="KW-0479">Metal-binding</keyword>
<keyword id="KW-0904">Protein phosphatase</keyword>
<keyword id="KW-1185">Reference proteome</keyword>
<protein>
    <recommendedName>
        <fullName>Probable protein phosphatase 2C 5</fullName>
        <shortName>PP2C 5</shortName>
        <ecNumber>3.1.3.16</ecNumber>
    </recommendedName>
</protein>
<organism>
    <name type="scientific">Paramecium tetraurelia</name>
    <dbReference type="NCBI Taxonomy" id="5888"/>
    <lineage>
        <taxon>Eukaryota</taxon>
        <taxon>Sar</taxon>
        <taxon>Alveolata</taxon>
        <taxon>Ciliophora</taxon>
        <taxon>Intramacronucleata</taxon>
        <taxon>Oligohymenophorea</taxon>
        <taxon>Peniculida</taxon>
        <taxon>Parameciidae</taxon>
        <taxon>Paramecium</taxon>
    </lineage>
</organism>